<dbReference type="EC" id="1.2.1.38" evidence="1"/>
<dbReference type="EMBL" id="CP000153">
    <property type="protein sequence ID" value="ABB44810.1"/>
    <property type="molecule type" value="Genomic_DNA"/>
</dbReference>
<dbReference type="RefSeq" id="WP_011373162.1">
    <property type="nucleotide sequence ID" value="NC_007575.1"/>
</dbReference>
<dbReference type="SMR" id="Q30QC1"/>
<dbReference type="STRING" id="326298.Suden_1533"/>
<dbReference type="KEGG" id="tdn:Suden_1533"/>
<dbReference type="eggNOG" id="COG0002">
    <property type="taxonomic scope" value="Bacteria"/>
</dbReference>
<dbReference type="HOGENOM" id="CLU_006384_0_1_7"/>
<dbReference type="OrthoDB" id="9801289at2"/>
<dbReference type="UniPathway" id="UPA00068">
    <property type="reaction ID" value="UER00108"/>
</dbReference>
<dbReference type="Proteomes" id="UP000002714">
    <property type="component" value="Chromosome"/>
</dbReference>
<dbReference type="GO" id="GO:0005737">
    <property type="term" value="C:cytoplasm"/>
    <property type="evidence" value="ECO:0007669"/>
    <property type="project" value="UniProtKB-SubCell"/>
</dbReference>
<dbReference type="GO" id="GO:0003942">
    <property type="term" value="F:N-acetyl-gamma-glutamyl-phosphate reductase activity"/>
    <property type="evidence" value="ECO:0007669"/>
    <property type="project" value="UniProtKB-UniRule"/>
</dbReference>
<dbReference type="GO" id="GO:0051287">
    <property type="term" value="F:NAD binding"/>
    <property type="evidence" value="ECO:0007669"/>
    <property type="project" value="InterPro"/>
</dbReference>
<dbReference type="GO" id="GO:0070401">
    <property type="term" value="F:NADP+ binding"/>
    <property type="evidence" value="ECO:0007669"/>
    <property type="project" value="InterPro"/>
</dbReference>
<dbReference type="GO" id="GO:0006526">
    <property type="term" value="P:L-arginine biosynthetic process"/>
    <property type="evidence" value="ECO:0007669"/>
    <property type="project" value="UniProtKB-UniRule"/>
</dbReference>
<dbReference type="CDD" id="cd23934">
    <property type="entry name" value="AGPR_1_C"/>
    <property type="match status" value="1"/>
</dbReference>
<dbReference type="CDD" id="cd17895">
    <property type="entry name" value="AGPR_1_N"/>
    <property type="match status" value="1"/>
</dbReference>
<dbReference type="Gene3D" id="3.30.360.10">
    <property type="entry name" value="Dihydrodipicolinate Reductase, domain 2"/>
    <property type="match status" value="1"/>
</dbReference>
<dbReference type="Gene3D" id="3.40.50.720">
    <property type="entry name" value="NAD(P)-binding Rossmann-like Domain"/>
    <property type="match status" value="1"/>
</dbReference>
<dbReference type="HAMAP" id="MF_00150">
    <property type="entry name" value="ArgC_type1"/>
    <property type="match status" value="1"/>
</dbReference>
<dbReference type="InterPro" id="IPR023013">
    <property type="entry name" value="AGPR_AS"/>
</dbReference>
<dbReference type="InterPro" id="IPR000706">
    <property type="entry name" value="AGPR_type-1"/>
</dbReference>
<dbReference type="InterPro" id="IPR036291">
    <property type="entry name" value="NAD(P)-bd_dom_sf"/>
</dbReference>
<dbReference type="InterPro" id="IPR050085">
    <property type="entry name" value="NAGSA_dehydrogenase"/>
</dbReference>
<dbReference type="InterPro" id="IPR000534">
    <property type="entry name" value="Semialdehyde_DH_NAD-bd"/>
</dbReference>
<dbReference type="NCBIfam" id="TIGR01850">
    <property type="entry name" value="argC"/>
    <property type="match status" value="1"/>
</dbReference>
<dbReference type="PANTHER" id="PTHR32338:SF10">
    <property type="entry name" value="N-ACETYL-GAMMA-GLUTAMYL-PHOSPHATE REDUCTASE, CHLOROPLASTIC-RELATED"/>
    <property type="match status" value="1"/>
</dbReference>
<dbReference type="PANTHER" id="PTHR32338">
    <property type="entry name" value="N-ACETYL-GAMMA-GLUTAMYL-PHOSPHATE REDUCTASE, CHLOROPLASTIC-RELATED-RELATED"/>
    <property type="match status" value="1"/>
</dbReference>
<dbReference type="Pfam" id="PF01118">
    <property type="entry name" value="Semialdhyde_dh"/>
    <property type="match status" value="1"/>
</dbReference>
<dbReference type="Pfam" id="PF22698">
    <property type="entry name" value="Semialdhyde_dhC_1"/>
    <property type="match status" value="1"/>
</dbReference>
<dbReference type="SMART" id="SM00859">
    <property type="entry name" value="Semialdhyde_dh"/>
    <property type="match status" value="1"/>
</dbReference>
<dbReference type="SUPFAM" id="SSF55347">
    <property type="entry name" value="Glyceraldehyde-3-phosphate dehydrogenase-like, C-terminal domain"/>
    <property type="match status" value="1"/>
</dbReference>
<dbReference type="SUPFAM" id="SSF51735">
    <property type="entry name" value="NAD(P)-binding Rossmann-fold domains"/>
    <property type="match status" value="1"/>
</dbReference>
<dbReference type="PROSITE" id="PS01224">
    <property type="entry name" value="ARGC"/>
    <property type="match status" value="1"/>
</dbReference>
<sequence length="334" mass="36578">MSAIDVGVIGASGYTGLELIKILLKHPKFNLSYVANTEGGATLSELHPSLKGAFECNVVKVDIDELAKKCELVFLAVPHQAAMAYVKPLIEKGLKVVDLSADYRLSKDIYEEFYCPHTDVENLLHAVYGLPELFAQKIKKAKLVANPGCFPTSAILGLLPFMDKRVAHTPIIVDSKTGVSGAGKKLSDVTHFVNVNENLFAYNPLLHRHAPEIAQKLGVDFDEVHFVPHLVPVTRGMLSSIYIQVEGDFDAFSILSEFYKDAKHVRVSKNPVDMKSVAGTNFCDIYVKQKNNILFISSAIDNLMRGASSAAVVNANLMMGFDEELGIPNIAYVP</sequence>
<name>ARGC_SULDN</name>
<comment type="function">
    <text evidence="1">Catalyzes the NADPH-dependent reduction of N-acetyl-5-glutamyl phosphate to yield N-acetyl-L-glutamate 5-semialdehyde.</text>
</comment>
<comment type="catalytic activity">
    <reaction evidence="1">
        <text>N-acetyl-L-glutamate 5-semialdehyde + phosphate + NADP(+) = N-acetyl-L-glutamyl 5-phosphate + NADPH + H(+)</text>
        <dbReference type="Rhea" id="RHEA:21588"/>
        <dbReference type="ChEBI" id="CHEBI:15378"/>
        <dbReference type="ChEBI" id="CHEBI:29123"/>
        <dbReference type="ChEBI" id="CHEBI:43474"/>
        <dbReference type="ChEBI" id="CHEBI:57783"/>
        <dbReference type="ChEBI" id="CHEBI:57936"/>
        <dbReference type="ChEBI" id="CHEBI:58349"/>
        <dbReference type="EC" id="1.2.1.38"/>
    </reaction>
</comment>
<comment type="pathway">
    <text evidence="1">Amino-acid biosynthesis; L-arginine biosynthesis; N(2)-acetyl-L-ornithine from L-glutamate: step 3/4.</text>
</comment>
<comment type="subcellular location">
    <subcellularLocation>
        <location evidence="1">Cytoplasm</location>
    </subcellularLocation>
</comment>
<comment type="similarity">
    <text evidence="1">Belongs to the NAGSA dehydrogenase family. Type 1 subfamily.</text>
</comment>
<accession>Q30QC1</accession>
<reference key="1">
    <citation type="journal article" date="2008" name="Appl. Environ. Microbiol.">
        <title>Genome of the epsilonproteobacterial chemolithoautotroph Sulfurimonas denitrificans.</title>
        <authorList>
            <person name="Sievert S.M."/>
            <person name="Scott K.M."/>
            <person name="Klotz M.G."/>
            <person name="Chain P.S.G."/>
            <person name="Hauser L.J."/>
            <person name="Hemp J."/>
            <person name="Huegler M."/>
            <person name="Land M."/>
            <person name="Lapidus A."/>
            <person name="Larimer F.W."/>
            <person name="Lucas S."/>
            <person name="Malfatti S.A."/>
            <person name="Meyer F."/>
            <person name="Paulsen I.T."/>
            <person name="Ren Q."/>
            <person name="Simon J."/>
            <person name="Bailey K."/>
            <person name="Diaz E."/>
            <person name="Fitzpatrick K.A."/>
            <person name="Glover B."/>
            <person name="Gwatney N."/>
            <person name="Korajkic A."/>
            <person name="Long A."/>
            <person name="Mobberley J.M."/>
            <person name="Pantry S.N."/>
            <person name="Pazder G."/>
            <person name="Peterson S."/>
            <person name="Quintanilla J.D."/>
            <person name="Sprinkle R."/>
            <person name="Stephens J."/>
            <person name="Thomas P."/>
            <person name="Vaughn R."/>
            <person name="Weber M.J."/>
            <person name="Wooten L.L."/>
        </authorList>
    </citation>
    <scope>NUCLEOTIDE SEQUENCE [LARGE SCALE GENOMIC DNA]</scope>
    <source>
        <strain>ATCC 33889 / DSM 1251</strain>
    </source>
</reference>
<protein>
    <recommendedName>
        <fullName evidence="1">N-acetyl-gamma-glutamyl-phosphate reductase</fullName>
        <shortName evidence="1">AGPR</shortName>
        <ecNumber evidence="1">1.2.1.38</ecNumber>
    </recommendedName>
    <alternativeName>
        <fullName evidence="1">N-acetyl-glutamate semialdehyde dehydrogenase</fullName>
        <shortName evidence="1">NAGSA dehydrogenase</shortName>
    </alternativeName>
</protein>
<gene>
    <name evidence="1" type="primary">argC</name>
    <name type="ordered locus">Suden_1533</name>
</gene>
<proteinExistence type="inferred from homology"/>
<keyword id="KW-0028">Amino-acid biosynthesis</keyword>
<keyword id="KW-0055">Arginine biosynthesis</keyword>
<keyword id="KW-0963">Cytoplasm</keyword>
<keyword id="KW-0521">NADP</keyword>
<keyword id="KW-0560">Oxidoreductase</keyword>
<keyword id="KW-1185">Reference proteome</keyword>
<feature type="chain" id="PRO_1000011078" description="N-acetyl-gamma-glutamyl-phosphate reductase">
    <location>
        <begin position="1"/>
        <end position="334"/>
    </location>
</feature>
<feature type="active site" evidence="1">
    <location>
        <position position="149"/>
    </location>
</feature>
<organism>
    <name type="scientific">Sulfurimonas denitrificans (strain ATCC 33889 / DSM 1251)</name>
    <name type="common">Thiomicrospira denitrificans (strain ATCC 33889 / DSM 1251)</name>
    <dbReference type="NCBI Taxonomy" id="326298"/>
    <lineage>
        <taxon>Bacteria</taxon>
        <taxon>Pseudomonadati</taxon>
        <taxon>Campylobacterota</taxon>
        <taxon>Epsilonproteobacteria</taxon>
        <taxon>Campylobacterales</taxon>
        <taxon>Sulfurimonadaceae</taxon>
        <taxon>Sulfurimonas</taxon>
    </lineage>
</organism>
<evidence type="ECO:0000255" key="1">
    <source>
        <dbReference type="HAMAP-Rule" id="MF_00150"/>
    </source>
</evidence>